<evidence type="ECO:0000255" key="1">
    <source>
        <dbReference type="HAMAP-Rule" id="MF_00235"/>
    </source>
</evidence>
<proteinExistence type="inferred from homology"/>
<reference key="1">
    <citation type="journal article" date="2011" name="J. Bacteriol.">
        <title>Complete genome and proteome of Acholeplasma laidlawii.</title>
        <authorList>
            <person name="Lazarev V.N."/>
            <person name="Levitskii S.A."/>
            <person name="Basovskii Y.I."/>
            <person name="Chukin M.M."/>
            <person name="Akopian T.A."/>
            <person name="Vereshchagin V.V."/>
            <person name="Kostrjukova E.S."/>
            <person name="Kovaleva G.Y."/>
            <person name="Kazanov M.D."/>
            <person name="Malko D.B."/>
            <person name="Vitreschak A.G."/>
            <person name="Sernova N.V."/>
            <person name="Gelfand M.S."/>
            <person name="Demina I.A."/>
            <person name="Serebryakova M.V."/>
            <person name="Galyamina M.A."/>
            <person name="Vtyurin N.N."/>
            <person name="Rogov S.I."/>
            <person name="Alexeev D.G."/>
            <person name="Ladygina V.G."/>
            <person name="Govorun V.M."/>
        </authorList>
    </citation>
    <scope>NUCLEOTIDE SEQUENCE [LARGE SCALE GENOMIC DNA]</scope>
    <source>
        <strain>PG-8A</strain>
    </source>
</reference>
<gene>
    <name evidence="1" type="primary">adk</name>
    <name type="ordered locus">ACL_0108</name>
</gene>
<dbReference type="EC" id="2.7.4.3" evidence="1"/>
<dbReference type="EMBL" id="CP000896">
    <property type="protein sequence ID" value="ABX80734.1"/>
    <property type="molecule type" value="Genomic_DNA"/>
</dbReference>
<dbReference type="RefSeq" id="WP_012242065.1">
    <property type="nucleotide sequence ID" value="NC_010163.1"/>
</dbReference>
<dbReference type="SMR" id="A9NEF4"/>
<dbReference type="STRING" id="441768.ACL_0108"/>
<dbReference type="GeneID" id="41338310"/>
<dbReference type="KEGG" id="acl:ACL_0108"/>
<dbReference type="eggNOG" id="COG0563">
    <property type="taxonomic scope" value="Bacteria"/>
</dbReference>
<dbReference type="HOGENOM" id="CLU_032354_1_2_14"/>
<dbReference type="OrthoDB" id="9805030at2"/>
<dbReference type="UniPathway" id="UPA00588">
    <property type="reaction ID" value="UER00649"/>
</dbReference>
<dbReference type="Proteomes" id="UP000008558">
    <property type="component" value="Chromosome"/>
</dbReference>
<dbReference type="GO" id="GO:0005737">
    <property type="term" value="C:cytoplasm"/>
    <property type="evidence" value="ECO:0007669"/>
    <property type="project" value="UniProtKB-SubCell"/>
</dbReference>
<dbReference type="GO" id="GO:0004017">
    <property type="term" value="F:adenylate kinase activity"/>
    <property type="evidence" value="ECO:0007669"/>
    <property type="project" value="UniProtKB-UniRule"/>
</dbReference>
<dbReference type="GO" id="GO:0005524">
    <property type="term" value="F:ATP binding"/>
    <property type="evidence" value="ECO:0007669"/>
    <property type="project" value="UniProtKB-UniRule"/>
</dbReference>
<dbReference type="GO" id="GO:0008270">
    <property type="term" value="F:zinc ion binding"/>
    <property type="evidence" value="ECO:0007669"/>
    <property type="project" value="UniProtKB-UniRule"/>
</dbReference>
<dbReference type="GO" id="GO:0044209">
    <property type="term" value="P:AMP salvage"/>
    <property type="evidence" value="ECO:0007669"/>
    <property type="project" value="UniProtKB-UniRule"/>
</dbReference>
<dbReference type="CDD" id="cd01428">
    <property type="entry name" value="ADK"/>
    <property type="match status" value="1"/>
</dbReference>
<dbReference type="FunFam" id="3.40.50.300:FF:000106">
    <property type="entry name" value="Adenylate kinase mitochondrial"/>
    <property type="match status" value="1"/>
</dbReference>
<dbReference type="Gene3D" id="3.40.50.300">
    <property type="entry name" value="P-loop containing nucleotide triphosphate hydrolases"/>
    <property type="match status" value="1"/>
</dbReference>
<dbReference type="HAMAP" id="MF_00235">
    <property type="entry name" value="Adenylate_kinase_Adk"/>
    <property type="match status" value="1"/>
</dbReference>
<dbReference type="InterPro" id="IPR006259">
    <property type="entry name" value="Adenyl_kin_sub"/>
</dbReference>
<dbReference type="InterPro" id="IPR000850">
    <property type="entry name" value="Adenylat/UMP-CMP_kin"/>
</dbReference>
<dbReference type="InterPro" id="IPR033690">
    <property type="entry name" value="Adenylat_kinase_CS"/>
</dbReference>
<dbReference type="InterPro" id="IPR007862">
    <property type="entry name" value="Adenylate_kinase_lid-dom"/>
</dbReference>
<dbReference type="InterPro" id="IPR027417">
    <property type="entry name" value="P-loop_NTPase"/>
</dbReference>
<dbReference type="NCBIfam" id="TIGR01351">
    <property type="entry name" value="adk"/>
    <property type="match status" value="1"/>
</dbReference>
<dbReference type="NCBIfam" id="NF001380">
    <property type="entry name" value="PRK00279.1-2"/>
    <property type="match status" value="1"/>
</dbReference>
<dbReference type="NCBIfam" id="NF001381">
    <property type="entry name" value="PRK00279.1-3"/>
    <property type="match status" value="1"/>
</dbReference>
<dbReference type="PANTHER" id="PTHR23359">
    <property type="entry name" value="NUCLEOTIDE KINASE"/>
    <property type="match status" value="1"/>
</dbReference>
<dbReference type="Pfam" id="PF00406">
    <property type="entry name" value="ADK"/>
    <property type="match status" value="1"/>
</dbReference>
<dbReference type="Pfam" id="PF05191">
    <property type="entry name" value="ADK_lid"/>
    <property type="match status" value="1"/>
</dbReference>
<dbReference type="PRINTS" id="PR00094">
    <property type="entry name" value="ADENYLTKNASE"/>
</dbReference>
<dbReference type="SUPFAM" id="SSF52540">
    <property type="entry name" value="P-loop containing nucleoside triphosphate hydrolases"/>
    <property type="match status" value="1"/>
</dbReference>
<dbReference type="PROSITE" id="PS00113">
    <property type="entry name" value="ADENYLATE_KINASE"/>
    <property type="match status" value="1"/>
</dbReference>
<sequence>MKTRMIFVGPPGAGKGSQAKIISQTLNIPHISTGDMFRTHIKGSTPLGLEAKKYTDQGLLVPDDVTNQMVKDRLSQKDVEKGFIFDGYPRTPDQAIFLDNLLMVTNQKLDVVLNISSSDEVIVKRITGRRTCPVCGAIYHVDNYPPKVAGICDNDGATLVQRKDDQKETIIRRLSVYKEETFPLIKYYAHKNLLMDVDGNQPLEVITKHVLEILEQK</sequence>
<accession>A9NEF4</accession>
<organism>
    <name type="scientific">Acholeplasma laidlawii (strain PG-8A)</name>
    <dbReference type="NCBI Taxonomy" id="441768"/>
    <lineage>
        <taxon>Bacteria</taxon>
        <taxon>Bacillati</taxon>
        <taxon>Mycoplasmatota</taxon>
        <taxon>Mollicutes</taxon>
        <taxon>Acholeplasmatales</taxon>
        <taxon>Acholeplasmataceae</taxon>
        <taxon>Acholeplasma</taxon>
    </lineage>
</organism>
<feature type="chain" id="PRO_1000191115" description="Adenylate kinase">
    <location>
        <begin position="1"/>
        <end position="217"/>
    </location>
</feature>
<feature type="region of interest" description="NMP" evidence="1">
    <location>
        <begin position="32"/>
        <end position="61"/>
    </location>
</feature>
<feature type="region of interest" description="LID" evidence="1">
    <location>
        <begin position="128"/>
        <end position="165"/>
    </location>
</feature>
<feature type="binding site" evidence="1">
    <location>
        <begin position="12"/>
        <end position="17"/>
    </location>
    <ligand>
        <name>ATP</name>
        <dbReference type="ChEBI" id="CHEBI:30616"/>
    </ligand>
</feature>
<feature type="binding site" evidence="1">
    <location>
        <position position="33"/>
    </location>
    <ligand>
        <name>AMP</name>
        <dbReference type="ChEBI" id="CHEBI:456215"/>
    </ligand>
</feature>
<feature type="binding site" evidence="1">
    <location>
        <position position="38"/>
    </location>
    <ligand>
        <name>AMP</name>
        <dbReference type="ChEBI" id="CHEBI:456215"/>
    </ligand>
</feature>
<feature type="binding site" evidence="1">
    <location>
        <begin position="59"/>
        <end position="61"/>
    </location>
    <ligand>
        <name>AMP</name>
        <dbReference type="ChEBI" id="CHEBI:456215"/>
    </ligand>
</feature>
<feature type="binding site" evidence="1">
    <location>
        <begin position="87"/>
        <end position="90"/>
    </location>
    <ligand>
        <name>AMP</name>
        <dbReference type="ChEBI" id="CHEBI:456215"/>
    </ligand>
</feature>
<feature type="binding site" evidence="1">
    <location>
        <position position="94"/>
    </location>
    <ligand>
        <name>AMP</name>
        <dbReference type="ChEBI" id="CHEBI:456215"/>
    </ligand>
</feature>
<feature type="binding site" evidence="1">
    <location>
        <position position="129"/>
    </location>
    <ligand>
        <name>ATP</name>
        <dbReference type="ChEBI" id="CHEBI:30616"/>
    </ligand>
</feature>
<feature type="binding site" evidence="1">
    <location>
        <position position="132"/>
    </location>
    <ligand>
        <name>Zn(2+)</name>
        <dbReference type="ChEBI" id="CHEBI:29105"/>
        <note>structural</note>
    </ligand>
</feature>
<feature type="binding site" evidence="1">
    <location>
        <position position="135"/>
    </location>
    <ligand>
        <name>Zn(2+)</name>
        <dbReference type="ChEBI" id="CHEBI:29105"/>
        <note>structural</note>
    </ligand>
</feature>
<feature type="binding site" evidence="1">
    <location>
        <begin position="138"/>
        <end position="139"/>
    </location>
    <ligand>
        <name>ATP</name>
        <dbReference type="ChEBI" id="CHEBI:30616"/>
    </ligand>
</feature>
<feature type="binding site" evidence="1">
    <location>
        <position position="152"/>
    </location>
    <ligand>
        <name>Zn(2+)</name>
        <dbReference type="ChEBI" id="CHEBI:29105"/>
        <note>structural</note>
    </ligand>
</feature>
<feature type="binding site" evidence="1">
    <location>
        <position position="155"/>
    </location>
    <ligand>
        <name>Zn(2+)</name>
        <dbReference type="ChEBI" id="CHEBI:29105"/>
        <note>structural</note>
    </ligand>
</feature>
<feature type="binding site" evidence="1">
    <location>
        <position position="162"/>
    </location>
    <ligand>
        <name>AMP</name>
        <dbReference type="ChEBI" id="CHEBI:456215"/>
    </ligand>
</feature>
<feature type="binding site" evidence="1">
    <location>
        <position position="173"/>
    </location>
    <ligand>
        <name>AMP</name>
        <dbReference type="ChEBI" id="CHEBI:456215"/>
    </ligand>
</feature>
<feature type="binding site" evidence="1">
    <location>
        <position position="201"/>
    </location>
    <ligand>
        <name>ATP</name>
        <dbReference type="ChEBI" id="CHEBI:30616"/>
    </ligand>
</feature>
<keyword id="KW-0067">ATP-binding</keyword>
<keyword id="KW-0963">Cytoplasm</keyword>
<keyword id="KW-0418">Kinase</keyword>
<keyword id="KW-0479">Metal-binding</keyword>
<keyword id="KW-0545">Nucleotide biosynthesis</keyword>
<keyword id="KW-0547">Nucleotide-binding</keyword>
<keyword id="KW-1185">Reference proteome</keyword>
<keyword id="KW-0808">Transferase</keyword>
<keyword id="KW-0862">Zinc</keyword>
<protein>
    <recommendedName>
        <fullName evidence="1">Adenylate kinase</fullName>
        <shortName evidence="1">AK</shortName>
        <ecNumber evidence="1">2.7.4.3</ecNumber>
    </recommendedName>
    <alternativeName>
        <fullName evidence="1">ATP-AMP transphosphorylase</fullName>
    </alternativeName>
    <alternativeName>
        <fullName evidence="1">ATP:AMP phosphotransferase</fullName>
    </alternativeName>
    <alternativeName>
        <fullName evidence="1">Adenylate monophosphate kinase</fullName>
    </alternativeName>
</protein>
<name>KAD_ACHLI</name>
<comment type="function">
    <text evidence="1">Catalyzes the reversible transfer of the terminal phosphate group between ATP and AMP. Plays an important role in cellular energy homeostasis and in adenine nucleotide metabolism.</text>
</comment>
<comment type="catalytic activity">
    <reaction evidence="1">
        <text>AMP + ATP = 2 ADP</text>
        <dbReference type="Rhea" id="RHEA:12973"/>
        <dbReference type="ChEBI" id="CHEBI:30616"/>
        <dbReference type="ChEBI" id="CHEBI:456215"/>
        <dbReference type="ChEBI" id="CHEBI:456216"/>
        <dbReference type="EC" id="2.7.4.3"/>
    </reaction>
</comment>
<comment type="pathway">
    <text evidence="1">Purine metabolism; AMP biosynthesis via salvage pathway; AMP from ADP: step 1/1.</text>
</comment>
<comment type="subunit">
    <text evidence="1">Monomer.</text>
</comment>
<comment type="subcellular location">
    <subcellularLocation>
        <location evidence="1">Cytoplasm</location>
    </subcellularLocation>
</comment>
<comment type="domain">
    <text evidence="1">Consists of three domains, a large central CORE domain and two small peripheral domains, NMPbind and LID, which undergo movements during catalysis. The LID domain closes over the site of phosphoryl transfer upon ATP binding. Assembling and dissambling the active center during each catalytic cycle provides an effective means to prevent ATP hydrolysis. Some bacteria have evolved a zinc-coordinating structure that stabilizes the LID domain.</text>
</comment>
<comment type="similarity">
    <text evidence="1">Belongs to the adenylate kinase family.</text>
</comment>